<keyword id="KW-1185">Reference proteome</keyword>
<reference key="1">
    <citation type="journal article" date="2005" name="J. Gen. Virol.">
        <title>A novel class of herpesvirus with bivalve hosts.</title>
        <authorList>
            <person name="Davison A.J."/>
            <person name="Trus B.L."/>
            <person name="Cheng N."/>
            <person name="Steven A.C."/>
            <person name="Watson M.S."/>
            <person name="Cunningham C."/>
            <person name="Le Deuff R.M."/>
            <person name="Renault T."/>
        </authorList>
    </citation>
    <scope>NUCLEOTIDE SEQUENCE [LARGE SCALE GENOMIC DNA]</scope>
</reference>
<sequence length="195" mass="22816">MSLYSKAVNAIVKAVQGNGEELRGIIPNSLCEEIKEEYERRKYTTFIKALDKDGYSSNTDEKIKSLISALEEIEYEIPDDISNVSEIAGEIMYIIEEKDVEFELLSDLIEARGDFSHCRYIRKTCIRYASQSSFCDRMCREYDEDSDDEDDFYDGWPDDGRCFNEDKYDLMDKLEGKYHGVYDLFMLVNELHSDW</sequence>
<organismHost>
    <name type="scientific">Magallana gigas</name>
    <name type="common">Pacific oyster</name>
    <name type="synonym">Crassostrea gigas</name>
    <dbReference type="NCBI Taxonomy" id="29159"/>
</organismHost>
<organismHost>
    <name type="scientific">Pecten maximus</name>
    <name type="common">King scallop</name>
    <name type="synonym">Pilgrim's clam</name>
    <dbReference type="NCBI Taxonomy" id="6579"/>
</organismHost>
<feature type="chain" id="PRO_0000385044" description="Uncharacterized protein ORF12">
    <location>
        <begin position="1"/>
        <end position="195"/>
    </location>
</feature>
<accession>Q6R7L1</accession>
<dbReference type="EMBL" id="AY509253">
    <property type="protein sequence ID" value="AAS00904.1"/>
    <property type="molecule type" value="Genomic_DNA"/>
</dbReference>
<dbReference type="RefSeq" id="YP_024557.1">
    <property type="nucleotide sequence ID" value="NC_005881.2"/>
</dbReference>
<dbReference type="SMR" id="Q6R7L1"/>
<dbReference type="KEGG" id="vg:2948208"/>
<dbReference type="Proteomes" id="UP000007021">
    <property type="component" value="Segment"/>
</dbReference>
<name>Y012_OSHVF</name>
<proteinExistence type="predicted"/>
<protein>
    <recommendedName>
        <fullName>Uncharacterized protein ORF12</fullName>
    </recommendedName>
</protein>
<organism>
    <name type="scientific">Ostreid herpesvirus 1 (isolate France)</name>
    <name type="common">OsHV-1</name>
    <name type="synonym">Pacific oyster herpesvirus</name>
    <dbReference type="NCBI Taxonomy" id="654903"/>
    <lineage>
        <taxon>Viruses</taxon>
        <taxon>Duplodnaviria</taxon>
        <taxon>Heunggongvirae</taxon>
        <taxon>Peploviricota</taxon>
        <taxon>Herviviricetes</taxon>
        <taxon>Herpesvirales</taxon>
        <taxon>Malacoherpesviridae</taxon>
        <taxon>Ostreavirus</taxon>
        <taxon>Ostreavirus ostreidmalaco1</taxon>
        <taxon>Ostreid herpesvirus 1</taxon>
    </lineage>
</organism>
<gene>
    <name type="ORF">ORF12</name>
</gene>